<dbReference type="EC" id="1.13.11.37" evidence="1"/>
<dbReference type="EMBL" id="AB154422">
    <property type="protein sequence ID" value="BAD30043.1"/>
    <property type="molecule type" value="Genomic_DNA"/>
</dbReference>
<dbReference type="RefSeq" id="WP_007295638.1">
    <property type="nucleotide sequence ID" value="NZ_CP051855.1"/>
</dbReference>
<dbReference type="SMR" id="Q6F4M7"/>
<dbReference type="BioCyc" id="MetaCyc:MONOMER-13015"/>
<dbReference type="GO" id="GO:0047074">
    <property type="term" value="F:4-hydroxycatechol 1,2-dioxygenase activity"/>
    <property type="evidence" value="ECO:0007669"/>
    <property type="project" value="UniProtKB-EC"/>
</dbReference>
<dbReference type="GO" id="GO:0018576">
    <property type="term" value="F:catechol 1,2-dioxygenase activity"/>
    <property type="evidence" value="ECO:0007669"/>
    <property type="project" value="InterPro"/>
</dbReference>
<dbReference type="GO" id="GO:0008199">
    <property type="term" value="F:ferric iron binding"/>
    <property type="evidence" value="ECO:0007669"/>
    <property type="project" value="InterPro"/>
</dbReference>
<dbReference type="GO" id="GO:0009056">
    <property type="term" value="P:catabolic process"/>
    <property type="evidence" value="ECO:0007669"/>
    <property type="project" value="UniProtKB-KW"/>
</dbReference>
<dbReference type="GO" id="GO:0009712">
    <property type="term" value="P:catechol-containing compound metabolic process"/>
    <property type="evidence" value="ECO:0007669"/>
    <property type="project" value="InterPro"/>
</dbReference>
<dbReference type="Gene3D" id="2.60.130.10">
    <property type="entry name" value="Aromatic compound dioxygenase"/>
    <property type="match status" value="1"/>
</dbReference>
<dbReference type="InterPro" id="IPR007535">
    <property type="entry name" value="Catechol_dOase_N"/>
</dbReference>
<dbReference type="InterPro" id="IPR000627">
    <property type="entry name" value="Intradiol_dOase_C"/>
</dbReference>
<dbReference type="InterPro" id="IPR015889">
    <property type="entry name" value="Intradiol_dOase_core"/>
</dbReference>
<dbReference type="InterPro" id="IPR050770">
    <property type="entry name" value="Intradiol_RC_Dioxygenase"/>
</dbReference>
<dbReference type="PANTHER" id="PTHR33711">
    <property type="entry name" value="DIOXYGENASE, PUTATIVE (AFU_ORTHOLOGUE AFUA_2G02910)-RELATED"/>
    <property type="match status" value="1"/>
</dbReference>
<dbReference type="PANTHER" id="PTHR33711:SF7">
    <property type="entry name" value="INTRADIOL RING-CLEAVAGE DIOXYGENASES DOMAIN-CONTAINING PROTEIN-RELATED"/>
    <property type="match status" value="1"/>
</dbReference>
<dbReference type="Pfam" id="PF00775">
    <property type="entry name" value="Dioxygenase_C"/>
    <property type="match status" value="1"/>
</dbReference>
<dbReference type="Pfam" id="PF04444">
    <property type="entry name" value="Dioxygenase_N"/>
    <property type="match status" value="1"/>
</dbReference>
<dbReference type="SUPFAM" id="SSF49482">
    <property type="entry name" value="Aromatic compound dioxygenase"/>
    <property type="match status" value="1"/>
</dbReference>
<dbReference type="PROSITE" id="PS00083">
    <property type="entry name" value="INTRADIOL_DIOXYGENAS"/>
    <property type="match status" value="1"/>
</dbReference>
<evidence type="ECO:0000250" key="1">
    <source>
        <dbReference type="UniProtKB" id="Q5PXQ6"/>
    </source>
</evidence>
<evidence type="ECO:0000269" key="2">
    <source>
    </source>
</evidence>
<evidence type="ECO:0000305" key="3"/>
<feature type="chain" id="PRO_0000422329" description="Hydroxyquinol 1,2-dioxygenase">
    <location>
        <begin position="1"/>
        <end position="300"/>
    </location>
</feature>
<feature type="binding site" evidence="1">
    <location>
        <position position="167"/>
    </location>
    <ligand>
        <name>Fe cation</name>
        <dbReference type="ChEBI" id="CHEBI:24875"/>
    </ligand>
</feature>
<feature type="binding site" evidence="1">
    <location>
        <position position="200"/>
    </location>
    <ligand>
        <name>Fe cation</name>
        <dbReference type="ChEBI" id="CHEBI:24875"/>
    </ligand>
</feature>
<feature type="binding site" evidence="1">
    <location>
        <position position="224"/>
    </location>
    <ligand>
        <name>Fe cation</name>
        <dbReference type="ChEBI" id="CHEBI:24875"/>
    </ligand>
</feature>
<feature type="binding site" evidence="1">
    <location>
        <position position="226"/>
    </location>
    <ligand>
        <name>Fe cation</name>
        <dbReference type="ChEBI" id="CHEBI:24875"/>
    </ligand>
</feature>
<accession>Q6F4M7</accession>
<proteinExistence type="evidence at transcript level"/>
<gene>
    <name type="primary">npcC</name>
</gene>
<protein>
    <recommendedName>
        <fullName>Hydroxyquinol 1,2-dioxygenase</fullName>
        <ecNumber evidence="1">1.13.11.37</ecNumber>
    </recommendedName>
</protein>
<organism>
    <name type="scientific">Rhodococcus opacus</name>
    <name type="common">Nocardia opaca</name>
    <dbReference type="NCBI Taxonomy" id="37919"/>
    <lineage>
        <taxon>Bacteria</taxon>
        <taxon>Bacillati</taxon>
        <taxon>Actinomycetota</taxon>
        <taxon>Actinomycetes</taxon>
        <taxon>Mycobacteriales</taxon>
        <taxon>Nocardiaceae</taxon>
        <taxon>Rhodococcus</taxon>
    </lineage>
</organism>
<sequence length="300" mass="33199">MHTTDTETFEEQFAIEQRLVDSVVASFDSTTDPRLKELMQSLTRHLHAFIREVRLSEDEWSNAIAFLTAVGNITDDRRQEFILLSDVLGVSMQTIAVSNPAYEDATESTVFGPFFVEDAPEVTLGGDIAGGATGQPCWIEGTVTDTAGNPVPEARIEVWQNDEDGFYDVQYSDGRVSGRAHLFSDAHGRYRFWGMTPVPYPIPSDGPVGKMLAATNRSPMRVAHLHFMVTADGLRTLVTHIFVAGDPQLERGDSVFGVKDSLIKDFVEQPPGTPTPDGRHIGDRNWARCEFDIVLAPEQI</sequence>
<comment type="function">
    <text evidence="2">Involved in the degradation of para-nitrophenol (4-NP). Catalyzes the conversion of hydroxyquinol to malelylacetate.</text>
</comment>
<comment type="catalytic activity">
    <reaction evidence="1">
        <text>benzene-1,2,4-triol + O2 = maleylacetate + 2 H(+)</text>
        <dbReference type="Rhea" id="RHEA:35595"/>
        <dbReference type="ChEBI" id="CHEBI:15378"/>
        <dbReference type="ChEBI" id="CHEBI:15379"/>
        <dbReference type="ChEBI" id="CHEBI:16468"/>
        <dbReference type="ChEBI" id="CHEBI:16971"/>
        <dbReference type="EC" id="1.13.11.37"/>
    </reaction>
</comment>
<comment type="cofactor">
    <cofactor evidence="1">
        <name>Fe(3+)</name>
        <dbReference type="ChEBI" id="CHEBI:29034"/>
    </cofactor>
    <text evidence="1">Binds 1 Fe(3+) ion per subunit.</text>
</comment>
<comment type="pathway">
    <text>Aromatic compound metabolism.</text>
</comment>
<comment type="pathway">
    <text>Xenobiotic degradation.</text>
</comment>
<comment type="induction">
    <text evidence="2">By 4-NP.</text>
</comment>
<comment type="disruption phenotype">
    <text evidence="2">Cells lacking this gene completely lose the ability to grow on 4-NP, 4-NCA, and hydroxyquinol.</text>
</comment>
<comment type="similarity">
    <text evidence="3">Belongs to the intradiol ring-cleavage dioxygenase family.</text>
</comment>
<reference key="1">
    <citation type="journal article" date="2004" name="J. Bacteriol.">
        <title>A novel p-nitrophenol degradation gene cluster from a gram-positive bacterium, Rhodococcus opacus SAO101.</title>
        <authorList>
            <person name="Kitagawa W."/>
            <person name="Kimura N."/>
            <person name="Kamagata Y."/>
        </authorList>
    </citation>
    <scope>NUCLEOTIDE SEQUENCE [GENOMIC DNA]</scope>
    <scope>FUNCTION</scope>
    <scope>DISRUPTION PHENOTYPE</scope>
    <scope>INDUCTION</scope>
    <scope>NOMENCLATURE</scope>
    <source>
        <strain>SAO101</strain>
    </source>
</reference>
<keyword id="KW-0058">Aromatic hydrocarbons catabolism</keyword>
<keyword id="KW-0223">Dioxygenase</keyword>
<keyword id="KW-0408">Iron</keyword>
<keyword id="KW-0479">Metal-binding</keyword>
<keyword id="KW-0560">Oxidoreductase</keyword>
<name>NPCC_RHOOP</name>